<organism>
    <name type="scientific">Cyanothece sp. (strain PCC 7425 / ATCC 29141)</name>
    <dbReference type="NCBI Taxonomy" id="395961"/>
    <lineage>
        <taxon>Bacteria</taxon>
        <taxon>Bacillati</taxon>
        <taxon>Cyanobacteriota</taxon>
        <taxon>Cyanophyceae</taxon>
        <taxon>Gomontiellales</taxon>
        <taxon>Cyanothecaceae</taxon>
        <taxon>Cyanothece</taxon>
    </lineage>
</organism>
<keyword id="KW-0030">Aminoacyl-tRNA synthetase</keyword>
<keyword id="KW-0067">ATP-binding</keyword>
<keyword id="KW-0963">Cytoplasm</keyword>
<keyword id="KW-0436">Ligase</keyword>
<keyword id="KW-0547">Nucleotide-binding</keyword>
<keyword id="KW-0648">Protein biosynthesis</keyword>
<protein>
    <recommendedName>
        <fullName evidence="1">Leucine--tRNA ligase</fullName>
        <ecNumber evidence="1">6.1.1.4</ecNumber>
    </recommendedName>
    <alternativeName>
        <fullName evidence="1">Leucyl-tRNA synthetase</fullName>
        <shortName evidence="1">LeuRS</shortName>
    </alternativeName>
</protein>
<name>SYL_CYAP4</name>
<dbReference type="EC" id="6.1.1.4" evidence="1"/>
<dbReference type="EMBL" id="CP001344">
    <property type="protein sequence ID" value="ACL45365.1"/>
    <property type="molecule type" value="Genomic_DNA"/>
</dbReference>
<dbReference type="SMR" id="B8HM05"/>
<dbReference type="STRING" id="395961.Cyan7425_3031"/>
<dbReference type="KEGG" id="cyn:Cyan7425_3031"/>
<dbReference type="eggNOG" id="COG0495">
    <property type="taxonomic scope" value="Bacteria"/>
</dbReference>
<dbReference type="HOGENOM" id="CLU_004427_0_0_3"/>
<dbReference type="GO" id="GO:0005829">
    <property type="term" value="C:cytosol"/>
    <property type="evidence" value="ECO:0007669"/>
    <property type="project" value="TreeGrafter"/>
</dbReference>
<dbReference type="GO" id="GO:0002161">
    <property type="term" value="F:aminoacyl-tRNA deacylase activity"/>
    <property type="evidence" value="ECO:0007669"/>
    <property type="project" value="InterPro"/>
</dbReference>
<dbReference type="GO" id="GO:0005524">
    <property type="term" value="F:ATP binding"/>
    <property type="evidence" value="ECO:0007669"/>
    <property type="project" value="UniProtKB-UniRule"/>
</dbReference>
<dbReference type="GO" id="GO:0004823">
    <property type="term" value="F:leucine-tRNA ligase activity"/>
    <property type="evidence" value="ECO:0007669"/>
    <property type="project" value="UniProtKB-UniRule"/>
</dbReference>
<dbReference type="GO" id="GO:0006429">
    <property type="term" value="P:leucyl-tRNA aminoacylation"/>
    <property type="evidence" value="ECO:0007669"/>
    <property type="project" value="UniProtKB-UniRule"/>
</dbReference>
<dbReference type="CDD" id="cd07958">
    <property type="entry name" value="Anticodon_Ia_Leu_BEm"/>
    <property type="match status" value="1"/>
</dbReference>
<dbReference type="CDD" id="cd00812">
    <property type="entry name" value="LeuRS_core"/>
    <property type="match status" value="1"/>
</dbReference>
<dbReference type="FunFam" id="3.10.20.590:FF:000001">
    <property type="entry name" value="Leucine--tRNA ligase"/>
    <property type="match status" value="1"/>
</dbReference>
<dbReference type="FunFam" id="3.40.50.620:FF:000003">
    <property type="entry name" value="Leucine--tRNA ligase"/>
    <property type="match status" value="1"/>
</dbReference>
<dbReference type="FunFam" id="1.10.730.10:FF:000011">
    <property type="entry name" value="Leucine--tRNA ligase chloroplastic/mitochondrial"/>
    <property type="match status" value="1"/>
</dbReference>
<dbReference type="FunFam" id="3.40.50.620:FF:000100">
    <property type="entry name" value="probable leucine--tRNA ligase, mitochondrial"/>
    <property type="match status" value="1"/>
</dbReference>
<dbReference type="Gene3D" id="3.40.50.620">
    <property type="entry name" value="HUPs"/>
    <property type="match status" value="2"/>
</dbReference>
<dbReference type="Gene3D" id="1.10.730.10">
    <property type="entry name" value="Isoleucyl-tRNA Synthetase, Domain 1"/>
    <property type="match status" value="1"/>
</dbReference>
<dbReference type="HAMAP" id="MF_00049_B">
    <property type="entry name" value="Leu_tRNA_synth_B"/>
    <property type="match status" value="1"/>
</dbReference>
<dbReference type="InterPro" id="IPR001412">
    <property type="entry name" value="aa-tRNA-synth_I_CS"/>
</dbReference>
<dbReference type="InterPro" id="IPR002300">
    <property type="entry name" value="aa-tRNA-synth_Ia"/>
</dbReference>
<dbReference type="InterPro" id="IPR002302">
    <property type="entry name" value="Leu-tRNA-ligase"/>
</dbReference>
<dbReference type="InterPro" id="IPR025709">
    <property type="entry name" value="Leu_tRNA-synth_edit"/>
</dbReference>
<dbReference type="InterPro" id="IPR013155">
    <property type="entry name" value="M/V/L/I-tRNA-synth_anticd-bd"/>
</dbReference>
<dbReference type="InterPro" id="IPR015413">
    <property type="entry name" value="Methionyl/Leucyl_tRNA_Synth"/>
</dbReference>
<dbReference type="InterPro" id="IPR014729">
    <property type="entry name" value="Rossmann-like_a/b/a_fold"/>
</dbReference>
<dbReference type="InterPro" id="IPR009080">
    <property type="entry name" value="tRNAsynth_Ia_anticodon-bd"/>
</dbReference>
<dbReference type="InterPro" id="IPR009008">
    <property type="entry name" value="Val/Leu/Ile-tRNA-synth_edit"/>
</dbReference>
<dbReference type="NCBIfam" id="TIGR00396">
    <property type="entry name" value="leuS_bact"/>
    <property type="match status" value="1"/>
</dbReference>
<dbReference type="PANTHER" id="PTHR43740:SF2">
    <property type="entry name" value="LEUCINE--TRNA LIGASE, MITOCHONDRIAL"/>
    <property type="match status" value="1"/>
</dbReference>
<dbReference type="PANTHER" id="PTHR43740">
    <property type="entry name" value="LEUCYL-TRNA SYNTHETASE"/>
    <property type="match status" value="1"/>
</dbReference>
<dbReference type="Pfam" id="PF08264">
    <property type="entry name" value="Anticodon_1"/>
    <property type="match status" value="1"/>
</dbReference>
<dbReference type="Pfam" id="PF00133">
    <property type="entry name" value="tRNA-synt_1"/>
    <property type="match status" value="2"/>
</dbReference>
<dbReference type="Pfam" id="PF13603">
    <property type="entry name" value="tRNA-synt_1_2"/>
    <property type="match status" value="1"/>
</dbReference>
<dbReference type="Pfam" id="PF09334">
    <property type="entry name" value="tRNA-synt_1g"/>
    <property type="match status" value="1"/>
</dbReference>
<dbReference type="PRINTS" id="PR00985">
    <property type="entry name" value="TRNASYNTHLEU"/>
</dbReference>
<dbReference type="SUPFAM" id="SSF47323">
    <property type="entry name" value="Anticodon-binding domain of a subclass of class I aminoacyl-tRNA synthetases"/>
    <property type="match status" value="1"/>
</dbReference>
<dbReference type="SUPFAM" id="SSF52374">
    <property type="entry name" value="Nucleotidylyl transferase"/>
    <property type="match status" value="1"/>
</dbReference>
<dbReference type="SUPFAM" id="SSF50677">
    <property type="entry name" value="ValRS/IleRS/LeuRS editing domain"/>
    <property type="match status" value="1"/>
</dbReference>
<dbReference type="PROSITE" id="PS00178">
    <property type="entry name" value="AA_TRNA_LIGASE_I"/>
    <property type="match status" value="1"/>
</dbReference>
<accession>B8HM05</accession>
<feature type="chain" id="PRO_1000199190" description="Leucine--tRNA ligase">
    <location>
        <begin position="1"/>
        <end position="858"/>
    </location>
</feature>
<feature type="region of interest" description="Disordered" evidence="2">
    <location>
        <begin position="584"/>
        <end position="611"/>
    </location>
</feature>
<feature type="short sequence motif" description="'HIGH' region">
    <location>
        <begin position="42"/>
        <end position="52"/>
    </location>
</feature>
<feature type="short sequence motif" description="'KMSKS' region">
    <location>
        <begin position="619"/>
        <end position="623"/>
    </location>
</feature>
<feature type="compositionally biased region" description="Polar residues" evidence="2">
    <location>
        <begin position="584"/>
        <end position="594"/>
    </location>
</feature>
<feature type="binding site" evidence="1">
    <location>
        <position position="622"/>
    </location>
    <ligand>
        <name>ATP</name>
        <dbReference type="ChEBI" id="CHEBI:30616"/>
    </ligand>
</feature>
<reference key="1">
    <citation type="journal article" date="2011" name="MBio">
        <title>Novel metabolic attributes of the genus Cyanothece, comprising a group of unicellular nitrogen-fixing Cyanobacteria.</title>
        <authorList>
            <person name="Bandyopadhyay A."/>
            <person name="Elvitigala T."/>
            <person name="Welsh E."/>
            <person name="Stockel J."/>
            <person name="Liberton M."/>
            <person name="Min H."/>
            <person name="Sherman L.A."/>
            <person name="Pakrasi H.B."/>
        </authorList>
    </citation>
    <scope>NUCLEOTIDE SEQUENCE [LARGE SCALE GENOMIC DNA]</scope>
    <source>
        <strain>PCC 7425 / ATCC 29141</strain>
    </source>
</reference>
<sequence>MESRYQPTAIEEKWQQTWAEVGIDQTPTDRSKPKFYALSMFPYPSGNLHMGHVRNYTITDVIARVRRMQGYRVLHPMGWDAFGLPAENAAIKRGIHPAKWTADNITQMRSELKRLGLSYDWNCELATCSPDYYRWTQWIFLQFYQAGLAYQKEAAVNWDPIDQTVLANEQVDSEGRSWRSGAKVERKLLRQWFLKITDYAEELLQDLDQLTGWPEKVRKLQANWIGKSTGAYLEFPIVGRDEKISVYTTRPDTVYGVSYVVLAPEHPLTLQVTTKKQLKAVKSFIQEVTAASEIERTAEDQPKRGIATGGKAINPFTGAEIPIWIADYVLYEYGTGAVMGVPAHDSRDFKFAQTYQLPIRQVIIPPDPDLNEQPILQEAYTEPGLLINSGEFDGMPSTDAKAAIVAKAEATGWGQARVQYRLRDWLISRQRYWGAPIPVIHCPQCGIVPVPEADLPVVLPDDVQFSGRGPSPLAQLESWVKVNCPTCNTPARRETDTMDTFIDSSWYYLRYPDAQNDQQVFDPAKTNDWLPVDQYVGGIEHAILHLLYSRFFTKVLRDRGLLNFDEPFQRLLTQGMVQGLTYTNPNRSDSSRYIPSNLVDPNDPKDPETGEPLEVSYQTMSKSKYNGVAPEEVINKYGADTARMFILFKAPPEKDLEWDDADVEGQFRFLNRVWRLVTQYPVIEPTTKQGDALAKEEKELRRAIHTAIKEITADLGEEYQLNTAVSELMKLSNALTDASCKDSVIYTEGIETLLLLLAPFAPHISEELWQQLGHTTSVHQQSWPQVDPSALIVDEITIVIQILGKTRGTIQVPASSSREELEEYARQTPVAQRYLEGKTIKKVIVVPGKLVNFVVADA</sequence>
<gene>
    <name evidence="1" type="primary">leuS</name>
    <name type="ordered locus">Cyan7425_3031</name>
</gene>
<evidence type="ECO:0000255" key="1">
    <source>
        <dbReference type="HAMAP-Rule" id="MF_00049"/>
    </source>
</evidence>
<evidence type="ECO:0000256" key="2">
    <source>
        <dbReference type="SAM" id="MobiDB-lite"/>
    </source>
</evidence>
<proteinExistence type="inferred from homology"/>
<comment type="catalytic activity">
    <reaction evidence="1">
        <text>tRNA(Leu) + L-leucine + ATP = L-leucyl-tRNA(Leu) + AMP + diphosphate</text>
        <dbReference type="Rhea" id="RHEA:11688"/>
        <dbReference type="Rhea" id="RHEA-COMP:9613"/>
        <dbReference type="Rhea" id="RHEA-COMP:9622"/>
        <dbReference type="ChEBI" id="CHEBI:30616"/>
        <dbReference type="ChEBI" id="CHEBI:33019"/>
        <dbReference type="ChEBI" id="CHEBI:57427"/>
        <dbReference type="ChEBI" id="CHEBI:78442"/>
        <dbReference type="ChEBI" id="CHEBI:78494"/>
        <dbReference type="ChEBI" id="CHEBI:456215"/>
        <dbReference type="EC" id="6.1.1.4"/>
    </reaction>
</comment>
<comment type="subcellular location">
    <subcellularLocation>
        <location evidence="1">Cytoplasm</location>
    </subcellularLocation>
</comment>
<comment type="similarity">
    <text evidence="1">Belongs to the class-I aminoacyl-tRNA synthetase family.</text>
</comment>